<proteinExistence type="inferred from homology"/>
<feature type="chain" id="PRO_0000366316" description="UPF0735 ACT domain-containing protein LCABL_12100">
    <location>
        <begin position="1"/>
        <end position="144"/>
    </location>
</feature>
<feature type="domain" description="ACT" evidence="1">
    <location>
        <begin position="68"/>
        <end position="143"/>
    </location>
</feature>
<dbReference type="EMBL" id="FM177140">
    <property type="protein sequence ID" value="CAQ66295.1"/>
    <property type="molecule type" value="Genomic_DNA"/>
</dbReference>
<dbReference type="KEGG" id="lcb:LCABL_12100"/>
<dbReference type="HOGENOM" id="CLU_128147_0_0_9"/>
<dbReference type="CDD" id="cd04888">
    <property type="entry name" value="ACT_PheB-BS"/>
    <property type="match status" value="1"/>
</dbReference>
<dbReference type="Gene3D" id="3.30.70.260">
    <property type="match status" value="1"/>
</dbReference>
<dbReference type="HAMAP" id="MF_00707">
    <property type="entry name" value="UPF0735"/>
    <property type="match status" value="1"/>
</dbReference>
<dbReference type="InterPro" id="IPR045865">
    <property type="entry name" value="ACT-like_dom_sf"/>
</dbReference>
<dbReference type="InterPro" id="IPR002912">
    <property type="entry name" value="ACT_dom"/>
</dbReference>
<dbReference type="InterPro" id="IPR008310">
    <property type="entry name" value="UPF0735_ACT_dom-cont"/>
</dbReference>
<dbReference type="NCBIfam" id="NF003361">
    <property type="entry name" value="PRK04435.1"/>
    <property type="match status" value="1"/>
</dbReference>
<dbReference type="PIRSF" id="PIRSF025624">
    <property type="entry name" value="ACT_PheB"/>
    <property type="match status" value="1"/>
</dbReference>
<dbReference type="SUPFAM" id="SSF55021">
    <property type="entry name" value="ACT-like"/>
    <property type="match status" value="1"/>
</dbReference>
<dbReference type="PROSITE" id="PS51671">
    <property type="entry name" value="ACT"/>
    <property type="match status" value="1"/>
</dbReference>
<evidence type="ECO:0000255" key="1">
    <source>
        <dbReference type="HAMAP-Rule" id="MF_00707"/>
    </source>
</evidence>
<organism>
    <name type="scientific">Lacticaseibacillus casei (strain BL23)</name>
    <name type="common">Lactobacillus casei</name>
    <dbReference type="NCBI Taxonomy" id="543734"/>
    <lineage>
        <taxon>Bacteria</taxon>
        <taxon>Bacillati</taxon>
        <taxon>Bacillota</taxon>
        <taxon>Bacilli</taxon>
        <taxon>Lactobacillales</taxon>
        <taxon>Lactobacillaceae</taxon>
        <taxon>Lacticaseibacillus</taxon>
    </lineage>
</organism>
<protein>
    <recommendedName>
        <fullName evidence="1">UPF0735 ACT domain-containing protein LCABL_12100</fullName>
    </recommendedName>
</protein>
<reference key="1">
    <citation type="submission" date="2008-06" db="EMBL/GenBank/DDBJ databases">
        <title>Lactobacillus casei BL23 complete genome sequence.</title>
        <authorList>
            <person name="Maze A."/>
            <person name="Boel G."/>
            <person name="Bourand A."/>
            <person name="Loux V."/>
            <person name="Gibrat J.F."/>
            <person name="Zuniga M."/>
            <person name="Hartke A."/>
            <person name="Deutscher J."/>
        </authorList>
    </citation>
    <scope>NUCLEOTIDE SEQUENCE [LARGE SCALE GENOMIC DNA]</scope>
    <source>
        <strain>BL23</strain>
    </source>
</reference>
<accession>B3WD44</accession>
<gene>
    <name type="ordered locus">LCABL_12100</name>
</gene>
<name>Y1210_LACCB</name>
<sequence>MKQFYIVDSSMLPEVVGKVIAARALLQNGEVKQVSEAVKQVGISRGTYYKYKDYVFLPDPEMASRKAVISLMLHHDRGILSEVLTTMSQAQASIVTINQNIPIHNWASVVMSFDISALQGTLDDLVTKLGNIRGVSDVHLVSVE</sequence>
<comment type="similarity">
    <text evidence="1">Belongs to the UPF0735 family.</text>
</comment>